<gene>
    <name evidence="1" type="primary">ruvA</name>
    <name type="ordered locus">BB_0023</name>
</gene>
<accession>P70827</accession>
<accession>O51054</accession>
<evidence type="ECO:0000255" key="1">
    <source>
        <dbReference type="HAMAP-Rule" id="MF_00031"/>
    </source>
</evidence>
<evidence type="ECO:0000305" key="2"/>
<reference key="1">
    <citation type="journal article" date="1998" name="Res. Microbiol.">
        <title>Homologues of helicase genes priA and ruvAB of Borrelia burgdorferi, the Lyme borreliosis agent.</title>
        <authorList>
            <person name="Boursaux-Eude C."/>
            <person name="Margarita D."/>
            <person name="Belfaiza J."/>
            <person name="Old I.G."/>
            <person name="Saint-Girons I."/>
        </authorList>
    </citation>
    <scope>NUCLEOTIDE SEQUENCE [GENOMIC DNA] OF 20-197</scope>
    <source>
        <strain>HB19</strain>
    </source>
</reference>
<reference key="2">
    <citation type="journal article" date="1997" name="Nature">
        <title>Genomic sequence of a Lyme disease spirochaete, Borrelia burgdorferi.</title>
        <authorList>
            <person name="Fraser C.M."/>
            <person name="Casjens S."/>
            <person name="Huang W.M."/>
            <person name="Sutton G.G."/>
            <person name="Clayton R.A."/>
            <person name="Lathigra R."/>
            <person name="White O."/>
            <person name="Ketchum K.A."/>
            <person name="Dodson R.J."/>
            <person name="Hickey E.K."/>
            <person name="Gwinn M.L."/>
            <person name="Dougherty B.A."/>
            <person name="Tomb J.-F."/>
            <person name="Fleischmann R.D."/>
            <person name="Richardson D.L."/>
            <person name="Peterson J.D."/>
            <person name="Kerlavage A.R."/>
            <person name="Quackenbush J."/>
            <person name="Salzberg S.L."/>
            <person name="Hanson M."/>
            <person name="van Vugt R."/>
            <person name="Palmer N."/>
            <person name="Adams M.D."/>
            <person name="Gocayne J.D."/>
            <person name="Weidman J.F."/>
            <person name="Utterback T.R."/>
            <person name="Watthey L."/>
            <person name="McDonald L.A."/>
            <person name="Artiach P."/>
            <person name="Bowman C."/>
            <person name="Garland S.A."/>
            <person name="Fujii C."/>
            <person name="Cotton M.D."/>
            <person name="Horst K."/>
            <person name="Roberts K.M."/>
            <person name="Hatch B."/>
            <person name="Smith H.O."/>
            <person name="Venter J.C."/>
        </authorList>
    </citation>
    <scope>NUCLEOTIDE SEQUENCE [LARGE SCALE GENOMIC DNA]</scope>
    <source>
        <strain>ATCC 35210 / DSM 4680 / CIP 102532 / B31</strain>
    </source>
</reference>
<organism>
    <name type="scientific">Borreliella burgdorferi (strain ATCC 35210 / DSM 4680 / CIP 102532 / B31)</name>
    <name type="common">Borrelia burgdorferi</name>
    <dbReference type="NCBI Taxonomy" id="224326"/>
    <lineage>
        <taxon>Bacteria</taxon>
        <taxon>Pseudomonadati</taxon>
        <taxon>Spirochaetota</taxon>
        <taxon>Spirochaetia</taxon>
        <taxon>Spirochaetales</taxon>
        <taxon>Borreliaceae</taxon>
        <taxon>Borreliella</taxon>
    </lineage>
</organism>
<protein>
    <recommendedName>
        <fullName evidence="1">Holliday junction branch migration complex subunit RuvA</fullName>
    </recommendedName>
</protein>
<comment type="function">
    <text evidence="1">The RuvA-RuvB-RuvC complex processes Holliday junction (HJ) DNA during genetic recombination and DNA repair, while the RuvA-RuvB complex plays an important role in the rescue of blocked DNA replication forks via replication fork reversal (RFR). RuvA specifically binds to HJ cruciform DNA, conferring on it an open structure. The RuvB hexamer acts as an ATP-dependent pump, pulling dsDNA into and through the RuvAB complex. HJ branch migration allows RuvC to scan DNA until it finds its consensus sequence, where it cleaves and resolves the cruciform DNA.</text>
</comment>
<comment type="subunit">
    <text evidence="1">Homotetramer. Forms an RuvA(8)-RuvB(12)-Holliday junction (HJ) complex. HJ DNA is sandwiched between 2 RuvA tetramers; dsDNA enters through RuvA and exits via RuvB. An RuvB hexamer assembles on each DNA strand where it exits the tetramer. Each RuvB hexamer is contacted by two RuvA subunits (via domain III) on 2 adjacent RuvB subunits; this complex drives branch migration. In the full resolvosome a probable DNA-RuvA(4)-RuvB(12)-RuvC(2) complex forms which resolves the HJ.</text>
</comment>
<comment type="subcellular location">
    <subcellularLocation>
        <location evidence="1">Cytoplasm</location>
    </subcellularLocation>
</comment>
<comment type="domain">
    <text evidence="1">Has three domains with a flexible linker between the domains II and III and assumes an 'L' shape. Domain III is highly mobile and contacts RuvB.</text>
</comment>
<comment type="similarity">
    <text evidence="1">Belongs to the RuvA family.</text>
</comment>
<sequence length="197" mass="22688">MINKIHGKVIEKKESSLVLMTTVFEFELLVSAFCLANFNLSDKVELFTYLYTRENELKLFGFLNSDEREIFKELIGVSGVGPRAALRVLSNIRYNEFKEAIDKEDIELVSKIKGIGKKMAGKMFLHLQGKLLINSELESTGLFRFKELEESIVSMGFDRKIVNSKIREAFNLAEFANLKDSEKEQFLFKEVLKRISN</sequence>
<feature type="chain" id="PRO_0000094606" description="Holliday junction branch migration complex subunit RuvA">
    <location>
        <begin position="1"/>
        <end position="197"/>
    </location>
</feature>
<feature type="region of interest" description="Domain I" evidence="1">
    <location>
        <begin position="1"/>
        <end position="63"/>
    </location>
</feature>
<feature type="region of interest" description="Domain II" evidence="1">
    <location>
        <begin position="64"/>
        <end position="139"/>
    </location>
</feature>
<feature type="region of interest" description="Flexible linker" evidence="1">
    <location>
        <position position="139"/>
    </location>
</feature>
<feature type="region of interest" description="Domain III" evidence="1">
    <location>
        <begin position="140"/>
        <end position="197"/>
    </location>
</feature>
<feature type="sequence conflict" description="In Ref. 1; CAA70096." evidence="2" ref="1">
    <original>K</original>
    <variation>R</variation>
    <location>
        <position position="103"/>
    </location>
</feature>
<keyword id="KW-0963">Cytoplasm</keyword>
<keyword id="KW-0227">DNA damage</keyword>
<keyword id="KW-0233">DNA recombination</keyword>
<keyword id="KW-0234">DNA repair</keyword>
<keyword id="KW-0238">DNA-binding</keyword>
<keyword id="KW-1185">Reference proteome</keyword>
<dbReference type="EMBL" id="Y08885">
    <property type="protein sequence ID" value="CAA70096.1"/>
    <property type="molecule type" value="Genomic_DNA"/>
</dbReference>
<dbReference type="EMBL" id="AE000783">
    <property type="protein sequence ID" value="AAC66409.1"/>
    <property type="molecule type" value="Genomic_DNA"/>
</dbReference>
<dbReference type="PIR" id="G70102">
    <property type="entry name" value="G70102"/>
</dbReference>
<dbReference type="RefSeq" id="NP_212157.1">
    <property type="nucleotide sequence ID" value="NC_001318.1"/>
</dbReference>
<dbReference type="RefSeq" id="WP_002658353.1">
    <property type="nucleotide sequence ID" value="NC_001318.1"/>
</dbReference>
<dbReference type="SMR" id="P70827"/>
<dbReference type="STRING" id="224326.BB_0023"/>
<dbReference type="PaxDb" id="224326-BB_0023"/>
<dbReference type="EnsemblBacteria" id="AAC66409">
    <property type="protein sequence ID" value="AAC66409"/>
    <property type="gene ID" value="BB_0023"/>
</dbReference>
<dbReference type="GeneID" id="56568192"/>
<dbReference type="KEGG" id="bbu:BB_0023"/>
<dbReference type="PATRIC" id="fig|224326.49.peg.422"/>
<dbReference type="HOGENOM" id="CLU_087936_2_0_12"/>
<dbReference type="OrthoDB" id="5293449at2"/>
<dbReference type="Proteomes" id="UP000001807">
    <property type="component" value="Chromosome"/>
</dbReference>
<dbReference type="GO" id="GO:0005737">
    <property type="term" value="C:cytoplasm"/>
    <property type="evidence" value="ECO:0007669"/>
    <property type="project" value="UniProtKB-SubCell"/>
</dbReference>
<dbReference type="GO" id="GO:0048476">
    <property type="term" value="C:Holliday junction resolvase complex"/>
    <property type="evidence" value="ECO:0007669"/>
    <property type="project" value="UniProtKB-UniRule"/>
</dbReference>
<dbReference type="GO" id="GO:0005524">
    <property type="term" value="F:ATP binding"/>
    <property type="evidence" value="ECO:0007669"/>
    <property type="project" value="InterPro"/>
</dbReference>
<dbReference type="GO" id="GO:0000400">
    <property type="term" value="F:four-way junction DNA binding"/>
    <property type="evidence" value="ECO:0007669"/>
    <property type="project" value="UniProtKB-UniRule"/>
</dbReference>
<dbReference type="GO" id="GO:0009378">
    <property type="term" value="F:four-way junction helicase activity"/>
    <property type="evidence" value="ECO:0007669"/>
    <property type="project" value="InterPro"/>
</dbReference>
<dbReference type="GO" id="GO:0006310">
    <property type="term" value="P:DNA recombination"/>
    <property type="evidence" value="ECO:0007669"/>
    <property type="project" value="UniProtKB-UniRule"/>
</dbReference>
<dbReference type="GO" id="GO:0006281">
    <property type="term" value="P:DNA repair"/>
    <property type="evidence" value="ECO:0007669"/>
    <property type="project" value="UniProtKB-UniRule"/>
</dbReference>
<dbReference type="Gene3D" id="1.10.150.20">
    <property type="entry name" value="5' to 3' exonuclease, C-terminal subdomain"/>
    <property type="match status" value="1"/>
</dbReference>
<dbReference type="Gene3D" id="2.40.50.140">
    <property type="entry name" value="Nucleic acid-binding proteins"/>
    <property type="match status" value="1"/>
</dbReference>
<dbReference type="HAMAP" id="MF_00031">
    <property type="entry name" value="DNA_HJ_migration_RuvA"/>
    <property type="match status" value="1"/>
</dbReference>
<dbReference type="InterPro" id="IPR013849">
    <property type="entry name" value="DNA_helicase_Holl-junc_RuvA_I"/>
</dbReference>
<dbReference type="InterPro" id="IPR003583">
    <property type="entry name" value="Hlx-hairpin-Hlx_DNA-bd_motif"/>
</dbReference>
<dbReference type="InterPro" id="IPR012340">
    <property type="entry name" value="NA-bd_OB-fold"/>
</dbReference>
<dbReference type="InterPro" id="IPR000085">
    <property type="entry name" value="RuvA"/>
</dbReference>
<dbReference type="InterPro" id="IPR010994">
    <property type="entry name" value="RuvA_2-like"/>
</dbReference>
<dbReference type="NCBIfam" id="TIGR00084">
    <property type="entry name" value="ruvA"/>
    <property type="match status" value="1"/>
</dbReference>
<dbReference type="Pfam" id="PF14520">
    <property type="entry name" value="HHH_5"/>
    <property type="match status" value="1"/>
</dbReference>
<dbReference type="Pfam" id="PF01330">
    <property type="entry name" value="RuvA_N"/>
    <property type="match status" value="1"/>
</dbReference>
<dbReference type="SMART" id="SM00278">
    <property type="entry name" value="HhH1"/>
    <property type="match status" value="2"/>
</dbReference>
<dbReference type="SUPFAM" id="SSF50249">
    <property type="entry name" value="Nucleic acid-binding proteins"/>
    <property type="match status" value="1"/>
</dbReference>
<dbReference type="SUPFAM" id="SSF47781">
    <property type="entry name" value="RuvA domain 2-like"/>
    <property type="match status" value="1"/>
</dbReference>
<proteinExistence type="inferred from homology"/>
<name>RUVA_BORBU</name>